<organism>
    <name type="scientific">African swine fever virus (isolate Tick/South Africa/Pretoriuskop Pr4/1996)</name>
    <name type="common">ASFV</name>
    <dbReference type="NCBI Taxonomy" id="561443"/>
    <lineage>
        <taxon>Viruses</taxon>
        <taxon>Varidnaviria</taxon>
        <taxon>Bamfordvirae</taxon>
        <taxon>Nucleocytoviricota</taxon>
        <taxon>Pokkesviricetes</taxon>
        <taxon>Asfuvirales</taxon>
        <taxon>Asfarviridae</taxon>
        <taxon>Asfivirus</taxon>
        <taxon>African swine fever virus</taxon>
    </lineage>
</organism>
<name>KTHY_ASFP4</name>
<organismHost>
    <name type="scientific">Ornithodoros</name>
    <name type="common">relapsing fever ticks</name>
    <dbReference type="NCBI Taxonomy" id="6937"/>
</organismHost>
<organismHost>
    <name type="scientific">Phacochoerus aethiopicus</name>
    <name type="common">Warthog</name>
    <dbReference type="NCBI Taxonomy" id="85517"/>
</organismHost>
<organismHost>
    <name type="scientific">Phacochoerus africanus</name>
    <name type="common">Warthog</name>
    <dbReference type="NCBI Taxonomy" id="41426"/>
</organismHost>
<organismHost>
    <name type="scientific">Potamochoerus larvatus</name>
    <name type="common">Bushpig</name>
    <dbReference type="NCBI Taxonomy" id="273792"/>
</organismHost>
<organismHost>
    <name type="scientific">Sus scrofa</name>
    <name type="common">Pig</name>
    <dbReference type="NCBI Taxonomy" id="9823"/>
</organismHost>
<reference key="1">
    <citation type="submission" date="2003-03" db="EMBL/GenBank/DDBJ databases">
        <title>African swine fever virus genomes.</title>
        <authorList>
            <person name="Kutish G.F."/>
            <person name="Rock D.L."/>
        </authorList>
    </citation>
    <scope>NUCLEOTIDE SEQUENCE [LARGE SCALE GENOMIC DNA]</scope>
</reference>
<proteinExistence type="inferred from homology"/>
<comment type="function">
    <text>Catalyzes the conversion of dTMP to dTDP.</text>
</comment>
<comment type="catalytic activity">
    <reaction>
        <text>dTMP + ATP = dTDP + ADP</text>
        <dbReference type="Rhea" id="RHEA:13517"/>
        <dbReference type="ChEBI" id="CHEBI:30616"/>
        <dbReference type="ChEBI" id="CHEBI:58369"/>
        <dbReference type="ChEBI" id="CHEBI:63528"/>
        <dbReference type="ChEBI" id="CHEBI:456216"/>
        <dbReference type="EC" id="2.7.4.9"/>
    </reaction>
</comment>
<comment type="pathway">
    <text>Pyrimidine metabolism; dTTP biosynthesis.</text>
</comment>
<comment type="similarity">
    <text evidence="2">Belongs to the thymidylate kinase family.</text>
</comment>
<evidence type="ECO:0000255" key="1"/>
<evidence type="ECO:0000305" key="2"/>
<feature type="chain" id="PRO_0000355066" description="Thymidylate kinase">
    <location>
        <begin position="1"/>
        <end position="239"/>
    </location>
</feature>
<feature type="binding site" evidence="1">
    <location>
        <begin position="10"/>
        <end position="17"/>
    </location>
    <ligand>
        <name>ATP</name>
        <dbReference type="ChEBI" id="CHEBI:30616"/>
    </ligand>
</feature>
<sequence length="239" mass="27848">MRGILIAIEGVNRVGKSTQAMRLKKALECMDYNAVCIRFPNPDTTTGDLILQVLNKMIEMSSEQLHKLFTKHCSEFVAEIAALLKLNFIVIVDRYIWSGLAYAQADGITIETKNIFKPDYTFFLSSKKPLNEKPLTLQRLFETKEKQETIFTNFTIIMNDVPKNRLCIIPATLNKEIIHTMILTKTIKVFDNNSCLNYIKMYDDKYLNVQELNLFDFEWQKCIEDNNDKEEYDDDDFII</sequence>
<keyword id="KW-0067">ATP-binding</keyword>
<keyword id="KW-0418">Kinase</keyword>
<keyword id="KW-0545">Nucleotide biosynthesis</keyword>
<keyword id="KW-0547">Nucleotide-binding</keyword>
<keyword id="KW-0808">Transferase</keyword>
<dbReference type="EC" id="2.7.4.9"/>
<dbReference type="EMBL" id="AY261363">
    <property type="status" value="NOT_ANNOTATED_CDS"/>
    <property type="molecule type" value="Genomic_DNA"/>
</dbReference>
<dbReference type="SMR" id="P0C8G1"/>
<dbReference type="UniPathway" id="UPA00575"/>
<dbReference type="Proteomes" id="UP000000859">
    <property type="component" value="Segment"/>
</dbReference>
<dbReference type="GO" id="GO:0005524">
    <property type="term" value="F:ATP binding"/>
    <property type="evidence" value="ECO:0007669"/>
    <property type="project" value="UniProtKB-KW"/>
</dbReference>
<dbReference type="GO" id="GO:0004798">
    <property type="term" value="F:dTMP kinase activity"/>
    <property type="evidence" value="ECO:0007669"/>
    <property type="project" value="UniProtKB-EC"/>
</dbReference>
<dbReference type="GO" id="GO:0006233">
    <property type="term" value="P:dTDP biosynthetic process"/>
    <property type="evidence" value="ECO:0007669"/>
    <property type="project" value="TreeGrafter"/>
</dbReference>
<dbReference type="GO" id="GO:0006235">
    <property type="term" value="P:dTTP biosynthetic process"/>
    <property type="evidence" value="ECO:0007669"/>
    <property type="project" value="UniProtKB-UniPathway"/>
</dbReference>
<dbReference type="GO" id="GO:0006227">
    <property type="term" value="P:dUDP biosynthetic process"/>
    <property type="evidence" value="ECO:0007669"/>
    <property type="project" value="TreeGrafter"/>
</dbReference>
<dbReference type="Gene3D" id="3.40.50.300">
    <property type="entry name" value="P-loop containing nucleotide triphosphate hydrolases"/>
    <property type="match status" value="1"/>
</dbReference>
<dbReference type="InterPro" id="IPR027417">
    <property type="entry name" value="P-loop_NTPase"/>
</dbReference>
<dbReference type="InterPro" id="IPR039430">
    <property type="entry name" value="Thymidylate_kin-like_dom"/>
</dbReference>
<dbReference type="PANTHER" id="PTHR10344">
    <property type="entry name" value="THYMIDYLATE KINASE"/>
    <property type="match status" value="1"/>
</dbReference>
<dbReference type="PANTHER" id="PTHR10344:SF4">
    <property type="entry name" value="UMP-CMP KINASE 2, MITOCHONDRIAL"/>
    <property type="match status" value="1"/>
</dbReference>
<dbReference type="Pfam" id="PF02223">
    <property type="entry name" value="Thymidylate_kin"/>
    <property type="match status" value="1"/>
</dbReference>
<dbReference type="SUPFAM" id="SSF52540">
    <property type="entry name" value="P-loop containing nucleoside triphosphate hydrolases"/>
    <property type="match status" value="1"/>
</dbReference>
<dbReference type="PROSITE" id="PS01331">
    <property type="entry name" value="THYMIDYLATE_KINASE"/>
    <property type="match status" value="1"/>
</dbReference>
<gene>
    <name type="primary">TMK</name>
    <name type="ordered locus">Pret-048</name>
</gene>
<protein>
    <recommendedName>
        <fullName>Thymidylate kinase</fullName>
        <ecNumber>2.7.4.9</ecNumber>
    </recommendedName>
    <alternativeName>
        <fullName>dTMP kinase</fullName>
    </alternativeName>
</protein>
<accession>P0C8G1</accession>